<keyword id="KW-0349">Heme</keyword>
<keyword id="KW-0408">Iron</keyword>
<keyword id="KW-0472">Membrane</keyword>
<keyword id="KW-0479">Metal-binding</keyword>
<keyword id="KW-0503">Monooxygenase</keyword>
<keyword id="KW-0560">Oxidoreductase</keyword>
<keyword id="KW-1185">Reference proteome</keyword>
<keyword id="KW-0812">Transmembrane</keyword>
<keyword id="KW-1133">Transmembrane helix</keyword>
<dbReference type="EC" id="1.14.13.-" evidence="9"/>
<dbReference type="EMBL" id="AY660664">
    <property type="protein sequence ID" value="AAT81229.1"/>
    <property type="molecule type" value="mRNA"/>
</dbReference>
<dbReference type="EMBL" id="AP005471">
    <property type="protein sequence ID" value="BAD54586.1"/>
    <property type="molecule type" value="Genomic_DNA"/>
</dbReference>
<dbReference type="EMBL" id="AP008212">
    <property type="protein sequence ID" value="BAF19817.1"/>
    <property type="molecule type" value="Genomic_DNA"/>
</dbReference>
<dbReference type="EMBL" id="AP014962">
    <property type="protein sequence ID" value="BAS98302.1"/>
    <property type="molecule type" value="Genomic_DNA"/>
</dbReference>
<dbReference type="RefSeq" id="XP_015641629.1">
    <property type="nucleotide sequence ID" value="XM_015786143.1"/>
</dbReference>
<dbReference type="SMR" id="Q5Z5S6"/>
<dbReference type="FunCoup" id="Q5Z5S6">
    <property type="interactions" value="252"/>
</dbReference>
<dbReference type="STRING" id="39947.Q5Z5S6"/>
<dbReference type="PaxDb" id="39947-Q5Z5S6"/>
<dbReference type="EnsemblPlants" id="Os06t0568600-01">
    <property type="protein sequence ID" value="Os06t0568600-01"/>
    <property type="gene ID" value="Os06g0568600"/>
</dbReference>
<dbReference type="Gramene" id="Os06t0568600-01">
    <property type="protein sequence ID" value="Os06t0568600-01"/>
    <property type="gene ID" value="Os06g0568600"/>
</dbReference>
<dbReference type="KEGG" id="dosa:Os06g0568600"/>
<dbReference type="eggNOG" id="KOG0156">
    <property type="taxonomic scope" value="Eukaryota"/>
</dbReference>
<dbReference type="HOGENOM" id="CLU_001570_4_0_1"/>
<dbReference type="InParanoid" id="Q5Z5S6"/>
<dbReference type="OMA" id="VHEILSC"/>
<dbReference type="OrthoDB" id="2789670at2759"/>
<dbReference type="BRENDA" id="1.14.14.86">
    <property type="organism ID" value="8948"/>
</dbReference>
<dbReference type="Proteomes" id="UP000000763">
    <property type="component" value="Chromosome 6"/>
</dbReference>
<dbReference type="Proteomes" id="UP000059680">
    <property type="component" value="Chromosome 6"/>
</dbReference>
<dbReference type="GO" id="GO:0009707">
    <property type="term" value="C:chloroplast outer membrane"/>
    <property type="evidence" value="ECO:0000318"/>
    <property type="project" value="GO_Central"/>
</dbReference>
<dbReference type="GO" id="GO:0052615">
    <property type="term" value="F:ent-kaurene oxidase activity"/>
    <property type="evidence" value="ECO:0007669"/>
    <property type="project" value="InterPro"/>
</dbReference>
<dbReference type="GO" id="GO:0020037">
    <property type="term" value="F:heme binding"/>
    <property type="evidence" value="ECO:0007669"/>
    <property type="project" value="InterPro"/>
</dbReference>
<dbReference type="GO" id="GO:0005506">
    <property type="term" value="F:iron ion binding"/>
    <property type="evidence" value="ECO:0007669"/>
    <property type="project" value="InterPro"/>
</dbReference>
<dbReference type="GO" id="GO:0016709">
    <property type="term" value="F:oxidoreductase activity, acting on paired donors, with incorporation or reduction of molecular oxygen, NAD(P)H as one donor, and incorporation of one atom of oxygen"/>
    <property type="evidence" value="ECO:0000318"/>
    <property type="project" value="GO_Central"/>
</dbReference>
<dbReference type="GO" id="GO:0010241">
    <property type="term" value="P:ent-kaurene oxidation to kaurenoic acid"/>
    <property type="evidence" value="ECO:0000318"/>
    <property type="project" value="GO_Central"/>
</dbReference>
<dbReference type="GO" id="GO:0009686">
    <property type="term" value="P:gibberellin biosynthetic process"/>
    <property type="evidence" value="ECO:0000318"/>
    <property type="project" value="GO_Central"/>
</dbReference>
<dbReference type="CDD" id="cd11075">
    <property type="entry name" value="CYP77_89"/>
    <property type="match status" value="1"/>
</dbReference>
<dbReference type="FunFam" id="1.10.630.10:FF:000062">
    <property type="entry name" value="Ent-kaurene oxidase 2"/>
    <property type="match status" value="1"/>
</dbReference>
<dbReference type="Gene3D" id="1.10.630.10">
    <property type="entry name" value="Cytochrome P450"/>
    <property type="match status" value="1"/>
</dbReference>
<dbReference type="InterPro" id="IPR001128">
    <property type="entry name" value="Cyt_P450"/>
</dbReference>
<dbReference type="InterPro" id="IPR017972">
    <property type="entry name" value="Cyt_P450_CS"/>
</dbReference>
<dbReference type="InterPro" id="IPR002401">
    <property type="entry name" value="Cyt_P450_E_grp-I"/>
</dbReference>
<dbReference type="InterPro" id="IPR036396">
    <property type="entry name" value="Cyt_P450_sf"/>
</dbReference>
<dbReference type="InterPro" id="IPR044225">
    <property type="entry name" value="KO_chloroplastic"/>
</dbReference>
<dbReference type="PANTHER" id="PTHR47283">
    <property type="entry name" value="ENT-KAURENE OXIDASE, CHLOROPLASTIC"/>
    <property type="match status" value="1"/>
</dbReference>
<dbReference type="PANTHER" id="PTHR47283:SF1">
    <property type="entry name" value="ENT-KAURENE OXIDASE, CHLOROPLASTIC"/>
    <property type="match status" value="1"/>
</dbReference>
<dbReference type="Pfam" id="PF00067">
    <property type="entry name" value="p450"/>
    <property type="match status" value="1"/>
</dbReference>
<dbReference type="PRINTS" id="PR00463">
    <property type="entry name" value="EP450I"/>
</dbReference>
<dbReference type="PRINTS" id="PR00385">
    <property type="entry name" value="P450"/>
</dbReference>
<dbReference type="SUPFAM" id="SSF48264">
    <property type="entry name" value="Cytochrome P450"/>
    <property type="match status" value="1"/>
</dbReference>
<dbReference type="PROSITE" id="PS00086">
    <property type="entry name" value="CYTOCHROME_P450"/>
    <property type="match status" value="1"/>
</dbReference>
<sequence>MESLLAAGAGGIGVAAAAAVVAATLAVVPPKDRGNNPPPAVPGLPVIGNMHQLKEKKPHHTFTKWSKTYGPIYTIKTGASSVVVLNSTEVAKEAMIEKFSSISTKKLPKALSVISRKNMVSISDYGDFYKMAKRNIMLAILGFNAQKHFCDTRERMVSNVLSSLHKLVAVDPHSPLNFREVYTTELFGLSLIQNLGEDVCSVYVEEFGREISKEEIFHVLVHEILSCVVEPDWRDYFPYLSWLPNKSFETIVSSTEFRRDAVMNALIKRQKERIARGEARISYIDFLLEAKNSTQLTDHQLMLLLAESIAAAVDTVLVTTEWAMYELAKNPDKQEWLYREIREVCGGKAVTEEDLPRLPYLDAVLHETLRLHSPVPVLPTRFVHDDTTLAGYDVPAGTQVMINVFGCHMDEEAWESPGEWSPERFLGEGFKLADRYKTLAFGAGRRTCAGSQQAVSIACVAIARFVQELQWTLREGDGDKEDTMQYTALKLHPLHVHLKPRGS</sequence>
<organism>
    <name type="scientific">Oryza sativa subsp. japonica</name>
    <name type="common">Rice</name>
    <dbReference type="NCBI Taxonomy" id="39947"/>
    <lineage>
        <taxon>Eukaryota</taxon>
        <taxon>Viridiplantae</taxon>
        <taxon>Streptophyta</taxon>
        <taxon>Embryophyta</taxon>
        <taxon>Tracheophyta</taxon>
        <taxon>Spermatophyta</taxon>
        <taxon>Magnoliopsida</taxon>
        <taxon>Liliopsida</taxon>
        <taxon>Poales</taxon>
        <taxon>Poaceae</taxon>
        <taxon>BOP clade</taxon>
        <taxon>Oryzoideae</taxon>
        <taxon>Oryzeae</taxon>
        <taxon>Oryzinae</taxon>
        <taxon>Oryza</taxon>
        <taxon>Oryza sativa</taxon>
    </lineage>
</organism>
<comment type="function">
    <text evidence="10">May hydroxylate diterpenes.</text>
</comment>
<comment type="cofactor">
    <cofactor evidence="1">
        <name>heme</name>
        <dbReference type="ChEBI" id="CHEBI:30413"/>
    </cofactor>
</comment>
<comment type="subcellular location">
    <subcellularLocation>
        <location evidence="2">Membrane</location>
        <topology evidence="2">Single-pass membrane protein</topology>
    </subcellularLocation>
</comment>
<comment type="tissue specificity">
    <text evidence="4">Expressed in roots.</text>
</comment>
<comment type="induction">
    <text evidence="4">By UV irradiation.</text>
</comment>
<comment type="similarity">
    <text evidence="3">Belongs to the cytochrome P450 family.</text>
</comment>
<name>C7019_ORYSJ</name>
<protein>
    <recommendedName>
        <fullName evidence="6">Ent-kaurene oxidase-like 5</fullName>
        <shortName evidence="6">OsKOL5</shortName>
        <ecNumber evidence="9">1.14.13.-</ecNumber>
    </recommendedName>
    <alternativeName>
        <fullName evidence="8">Cytochrome P450 701A9</fullName>
    </alternativeName>
    <alternativeName>
        <fullName evidence="5">Ent-kaurene oxidase 5</fullName>
        <shortName evidence="5">OsKO5</shortName>
    </alternativeName>
    <alternativeName>
        <fullName evidence="7">OsKOS2</fullName>
    </alternativeName>
</protein>
<gene>
    <name evidence="8" type="primary">CYP701A9</name>
    <name evidence="12" type="ordered locus">Os06g0568600</name>
    <name evidence="9" type="ordered locus">LOC_Os06g37224</name>
    <name evidence="11" type="ORF">OSJNBa0062E01.13</name>
</gene>
<feature type="chain" id="PRO_0000430732" description="Ent-kaurene oxidase-like 5">
    <location>
        <begin position="1"/>
        <end position="503"/>
    </location>
</feature>
<feature type="transmembrane region" description="Helical" evidence="2">
    <location>
        <begin position="8"/>
        <end position="28"/>
    </location>
</feature>
<feature type="binding site" description="axial binding residue" evidence="1">
    <location>
        <position position="448"/>
    </location>
    <ligand>
        <name>heme</name>
        <dbReference type="ChEBI" id="CHEBI:30413"/>
    </ligand>
    <ligandPart>
        <name>Fe</name>
        <dbReference type="ChEBI" id="CHEBI:18248"/>
    </ligandPart>
</feature>
<feature type="sequence conflict" description="In Ref. 1; AAT81229." ref="1">
    <original>V</original>
    <variation>D</variation>
    <location>
        <position position="41"/>
    </location>
</feature>
<feature type="sequence conflict" description="In Ref. 1; AAT81229." ref="1">
    <original>H</original>
    <variation>R</variation>
    <location>
        <position position="148"/>
    </location>
</feature>
<feature type="sequence conflict" description="In Ref. 1; AAT81229." ref="1">
    <original>M</original>
    <variation>T</variation>
    <location>
        <position position="484"/>
    </location>
</feature>
<reference key="1">
    <citation type="journal article" date="2005" name="Plant Physiol.">
        <title>The rice dwarf virus P2 protein interacts with ent-kaurene oxidases in vivo, leading to reduced biosynthesis of gibberellins and rice dwarf symptoms.</title>
        <authorList>
            <person name="Zhu S."/>
            <person name="Gao F."/>
            <person name="Cao X."/>
            <person name="Chen M."/>
            <person name="Ye G."/>
            <person name="Wei C."/>
            <person name="Li Y."/>
        </authorList>
    </citation>
    <scope>NUCLEOTIDE SEQUENCE [MRNA]</scope>
    <source>
        <strain>cv. Xiushui 11</strain>
    </source>
</reference>
<reference key="2">
    <citation type="journal article" date="2005" name="Nature">
        <title>The map-based sequence of the rice genome.</title>
        <authorList>
            <consortium name="International rice genome sequencing project (IRGSP)"/>
        </authorList>
    </citation>
    <scope>NUCLEOTIDE SEQUENCE [LARGE SCALE GENOMIC DNA]</scope>
    <source>
        <strain>cv. Nipponbare</strain>
    </source>
</reference>
<reference key="3">
    <citation type="journal article" date="2008" name="Nucleic Acids Res.">
        <title>The rice annotation project database (RAP-DB): 2008 update.</title>
        <authorList>
            <consortium name="The rice annotation project (RAP)"/>
        </authorList>
    </citation>
    <scope>GENOME REANNOTATION</scope>
    <source>
        <strain>cv. Nipponbare</strain>
    </source>
</reference>
<reference key="4">
    <citation type="journal article" date="2013" name="Rice">
        <title>Improvement of the Oryza sativa Nipponbare reference genome using next generation sequence and optical map data.</title>
        <authorList>
            <person name="Kawahara Y."/>
            <person name="de la Bastide M."/>
            <person name="Hamilton J.P."/>
            <person name="Kanamori H."/>
            <person name="McCombie W.R."/>
            <person name="Ouyang S."/>
            <person name="Schwartz D.C."/>
            <person name="Tanaka T."/>
            <person name="Wu J."/>
            <person name="Zhou S."/>
            <person name="Childs K.L."/>
            <person name="Davidson R.M."/>
            <person name="Lin H."/>
            <person name="Quesada-Ocampo L."/>
            <person name="Vaillancourt B."/>
            <person name="Sakai H."/>
            <person name="Lee S.S."/>
            <person name="Kim J."/>
            <person name="Numa H."/>
            <person name="Itoh T."/>
            <person name="Buell C.R."/>
            <person name="Matsumoto T."/>
        </authorList>
    </citation>
    <scope>GENOME REANNOTATION</scope>
    <source>
        <strain>cv. Nipponbare</strain>
    </source>
</reference>
<reference key="5">
    <citation type="journal article" date="2004" name="Plant Mol. Biol.">
        <title>A rice semi-dwarf gene, Tan-Ginbozu (D35), encodes the gibberellin biosynthesis enzyme, ent-kaurene oxidase.</title>
        <authorList>
            <person name="Itoh H."/>
            <person name="Tatsumi T."/>
            <person name="Sakamoto T."/>
            <person name="Otomo K."/>
            <person name="Toyomasu T."/>
            <person name="Kitano H."/>
            <person name="Ashikari M."/>
            <person name="Ichihara S."/>
            <person name="Matsuoka M."/>
        </authorList>
    </citation>
    <scope>TISSUE SPECIFICITY</scope>
    <scope>INDUCTION BY UV IRRADIATION</scope>
</reference>
<reference key="6">
    <citation type="journal article" date="2004" name="Plant Physiol.">
        <title>An overview of gibberellin metabolism enzyme genes and their related mutants in rice.</title>
        <authorList>
            <person name="Sakamoto T."/>
            <person name="Miura K."/>
            <person name="Itoh H."/>
            <person name="Tatsumi T."/>
            <person name="Ueguchi-Tanaka M."/>
            <person name="Ishiyama K."/>
            <person name="Kobayashi M."/>
            <person name="Agrawal G.K."/>
            <person name="Takeda S."/>
            <person name="Abe K."/>
            <person name="Miyao A."/>
            <person name="Hirochika H."/>
            <person name="Kitano H."/>
            <person name="Ashikari M."/>
            <person name="Matsuoka M."/>
        </authorList>
    </citation>
    <scope>GENE FAMILY</scope>
</reference>
<reference key="7">
    <citation type="journal article" date="2012" name="Plant Physiol.">
        <title>CYP701A8: a rice ent-kaurene oxidase paralog diverted to more specialized diterpenoid metabolism.</title>
        <authorList>
            <person name="Wang Q."/>
            <person name="Hillwig M.L."/>
            <person name="Wu Y."/>
            <person name="Peters R.J."/>
        </authorList>
    </citation>
    <scope>FUNCTION</scope>
</reference>
<evidence type="ECO:0000250" key="1">
    <source>
        <dbReference type="UniProtKB" id="P04798"/>
    </source>
</evidence>
<evidence type="ECO:0000255" key="2"/>
<evidence type="ECO:0000255" key="3">
    <source>
        <dbReference type="RuleBase" id="RU000461"/>
    </source>
</evidence>
<evidence type="ECO:0000269" key="4">
    <source>
    </source>
</evidence>
<evidence type="ECO:0000303" key="5">
    <source>
    </source>
</evidence>
<evidence type="ECO:0000303" key="6">
    <source>
    </source>
</evidence>
<evidence type="ECO:0000303" key="7">
    <source>
    </source>
</evidence>
<evidence type="ECO:0000303" key="8">
    <source>
    </source>
</evidence>
<evidence type="ECO:0000305" key="9"/>
<evidence type="ECO:0000305" key="10">
    <source>
    </source>
</evidence>
<evidence type="ECO:0000312" key="11">
    <source>
        <dbReference type="EMBL" id="BAD54586.1"/>
    </source>
</evidence>
<evidence type="ECO:0000312" key="12">
    <source>
        <dbReference type="EMBL" id="BAF19817.1"/>
    </source>
</evidence>
<proteinExistence type="evidence at transcript level"/>
<accession>Q5Z5S6</accession>
<accession>A0A0P0WXZ0</accession>
<accession>Q68YV9</accession>